<sequence length="309" mass="33416">MILTVTMNPSIDISYPLDELKIDTVNRVVDVTKTAGGKGLNVTRVLSEFGDSVLATGLVGGKLGEFLVEHIDNQVKKDFFSIQGETRNCIAILHGDNQTEVLEKGPEVLEQEGQDFLEHFKKLLESVEVVAISGSLPTGLPVDYYASLVELANQAGKPVVLDCSGAALQAVLESPHKPTVIKPNNEELSQLLGREVSEDLDELKEVLQEPLFAGIEWIIVSLGANGTFAKHGDTFYKVDIPRIQVVNPVGSGDSTVAGISSGLLHKESDAELLIKANVLGMLNAQEKMTGHVNMANYQALYDQLIVKEV</sequence>
<accession>C1C7G0</accession>
<organism>
    <name type="scientific">Streptococcus pneumoniae (strain 70585)</name>
    <dbReference type="NCBI Taxonomy" id="488221"/>
    <lineage>
        <taxon>Bacteria</taxon>
        <taxon>Bacillati</taxon>
        <taxon>Bacillota</taxon>
        <taxon>Bacilli</taxon>
        <taxon>Lactobacillales</taxon>
        <taxon>Streptococcaceae</taxon>
        <taxon>Streptococcus</taxon>
    </lineage>
</organism>
<evidence type="ECO:0000255" key="1">
    <source>
        <dbReference type="HAMAP-Rule" id="MF_01557"/>
    </source>
</evidence>
<feature type="chain" id="PRO_1000185408" description="Tagatose-6-phosphate kinase">
    <location>
        <begin position="1"/>
        <end position="309"/>
    </location>
</feature>
<dbReference type="EC" id="2.7.1.144" evidence="1"/>
<dbReference type="EMBL" id="CP000918">
    <property type="protein sequence ID" value="ACO15917.1"/>
    <property type="molecule type" value="Genomic_DNA"/>
</dbReference>
<dbReference type="RefSeq" id="WP_000604279.1">
    <property type="nucleotide sequence ID" value="NC_012468.1"/>
</dbReference>
<dbReference type="SMR" id="C1C7G0"/>
<dbReference type="KEGG" id="snm:SP70585_1241"/>
<dbReference type="HOGENOM" id="CLU_050013_5_0_9"/>
<dbReference type="UniPathway" id="UPA00704">
    <property type="reaction ID" value="UER00715"/>
</dbReference>
<dbReference type="Proteomes" id="UP000002211">
    <property type="component" value="Chromosome"/>
</dbReference>
<dbReference type="GO" id="GO:0005829">
    <property type="term" value="C:cytosol"/>
    <property type="evidence" value="ECO:0007669"/>
    <property type="project" value="TreeGrafter"/>
</dbReference>
<dbReference type="GO" id="GO:0005524">
    <property type="term" value="F:ATP binding"/>
    <property type="evidence" value="ECO:0007669"/>
    <property type="project" value="UniProtKB-KW"/>
</dbReference>
<dbReference type="GO" id="GO:0008443">
    <property type="term" value="F:phosphofructokinase activity"/>
    <property type="evidence" value="ECO:0007669"/>
    <property type="project" value="TreeGrafter"/>
</dbReference>
<dbReference type="GO" id="GO:0009024">
    <property type="term" value="F:tagatose-6-phosphate kinase activity"/>
    <property type="evidence" value="ECO:0007669"/>
    <property type="project" value="UniProtKB-UniRule"/>
</dbReference>
<dbReference type="GO" id="GO:2001059">
    <property type="term" value="P:D-tagatose 6-phosphate catabolic process"/>
    <property type="evidence" value="ECO:0007669"/>
    <property type="project" value="UniProtKB-UniRule"/>
</dbReference>
<dbReference type="GO" id="GO:0019512">
    <property type="term" value="P:lactose catabolic process via tagatose-6-phosphate"/>
    <property type="evidence" value="ECO:0007669"/>
    <property type="project" value="InterPro"/>
</dbReference>
<dbReference type="CDD" id="cd01164">
    <property type="entry name" value="FruK_PfkB_like"/>
    <property type="match status" value="1"/>
</dbReference>
<dbReference type="FunFam" id="3.40.1190.20:FF:000001">
    <property type="entry name" value="Phosphofructokinase"/>
    <property type="match status" value="1"/>
</dbReference>
<dbReference type="Gene3D" id="3.40.1190.20">
    <property type="match status" value="1"/>
</dbReference>
<dbReference type="HAMAP" id="MF_01557">
    <property type="entry name" value="LacC"/>
    <property type="match status" value="1"/>
</dbReference>
<dbReference type="InterPro" id="IPR002173">
    <property type="entry name" value="Carboh/pur_kinase_PfkB_CS"/>
</dbReference>
<dbReference type="InterPro" id="IPR005926">
    <property type="entry name" value="LacC"/>
</dbReference>
<dbReference type="InterPro" id="IPR011611">
    <property type="entry name" value="PfkB_dom"/>
</dbReference>
<dbReference type="InterPro" id="IPR029056">
    <property type="entry name" value="Ribokinase-like"/>
</dbReference>
<dbReference type="InterPro" id="IPR017583">
    <property type="entry name" value="Tagatose/fructose_Pkinase"/>
</dbReference>
<dbReference type="NCBIfam" id="TIGR03168">
    <property type="entry name" value="1-PFK"/>
    <property type="match status" value="1"/>
</dbReference>
<dbReference type="NCBIfam" id="TIGR01231">
    <property type="entry name" value="lacC"/>
    <property type="match status" value="1"/>
</dbReference>
<dbReference type="NCBIfam" id="NF010033">
    <property type="entry name" value="PRK13508.1"/>
    <property type="match status" value="1"/>
</dbReference>
<dbReference type="PANTHER" id="PTHR46566:SF5">
    <property type="entry name" value="1-PHOSPHOFRUCTOKINASE"/>
    <property type="match status" value="1"/>
</dbReference>
<dbReference type="PANTHER" id="PTHR46566">
    <property type="entry name" value="1-PHOSPHOFRUCTOKINASE-RELATED"/>
    <property type="match status" value="1"/>
</dbReference>
<dbReference type="Pfam" id="PF00294">
    <property type="entry name" value="PfkB"/>
    <property type="match status" value="1"/>
</dbReference>
<dbReference type="PIRSF" id="PIRSF000535">
    <property type="entry name" value="1PFK/6PFK/LacC"/>
    <property type="match status" value="1"/>
</dbReference>
<dbReference type="SUPFAM" id="SSF53613">
    <property type="entry name" value="Ribokinase-like"/>
    <property type="match status" value="1"/>
</dbReference>
<dbReference type="PROSITE" id="PS00583">
    <property type="entry name" value="PFKB_KINASES_1"/>
    <property type="match status" value="1"/>
</dbReference>
<dbReference type="PROSITE" id="PS00584">
    <property type="entry name" value="PFKB_KINASES_2"/>
    <property type="match status" value="1"/>
</dbReference>
<name>LACC_STRP7</name>
<keyword id="KW-0067">ATP-binding</keyword>
<keyword id="KW-0418">Kinase</keyword>
<keyword id="KW-0423">Lactose metabolism</keyword>
<keyword id="KW-0547">Nucleotide-binding</keyword>
<keyword id="KW-0808">Transferase</keyword>
<protein>
    <recommendedName>
        <fullName evidence="1">Tagatose-6-phosphate kinase</fullName>
        <ecNumber evidence="1">2.7.1.144</ecNumber>
    </recommendedName>
    <alternativeName>
        <fullName evidence="1">Phosphotagatokinase</fullName>
    </alternativeName>
</protein>
<proteinExistence type="inferred from homology"/>
<gene>
    <name evidence="1" type="primary">lacC</name>
    <name type="ordered locus">SP70585_1241</name>
</gene>
<reference key="1">
    <citation type="journal article" date="2010" name="Genome Biol.">
        <title>Structure and dynamics of the pan-genome of Streptococcus pneumoniae and closely related species.</title>
        <authorList>
            <person name="Donati C."/>
            <person name="Hiller N.L."/>
            <person name="Tettelin H."/>
            <person name="Muzzi A."/>
            <person name="Croucher N.J."/>
            <person name="Angiuoli S.V."/>
            <person name="Oggioni M."/>
            <person name="Dunning Hotopp J.C."/>
            <person name="Hu F.Z."/>
            <person name="Riley D.R."/>
            <person name="Covacci A."/>
            <person name="Mitchell T.J."/>
            <person name="Bentley S.D."/>
            <person name="Kilian M."/>
            <person name="Ehrlich G.D."/>
            <person name="Rappuoli R."/>
            <person name="Moxon E.R."/>
            <person name="Masignani V."/>
        </authorList>
    </citation>
    <scope>NUCLEOTIDE SEQUENCE [LARGE SCALE GENOMIC DNA]</scope>
    <source>
        <strain>70585</strain>
    </source>
</reference>
<comment type="catalytic activity">
    <reaction evidence="1">
        <text>D-tagatofuranose 6-phosphate + ATP = D-tagatofuranose 1,6-bisphosphate + ADP + H(+)</text>
        <dbReference type="Rhea" id="RHEA:12420"/>
        <dbReference type="ChEBI" id="CHEBI:15378"/>
        <dbReference type="ChEBI" id="CHEBI:30616"/>
        <dbReference type="ChEBI" id="CHEBI:58694"/>
        <dbReference type="ChEBI" id="CHEBI:58695"/>
        <dbReference type="ChEBI" id="CHEBI:456216"/>
        <dbReference type="EC" id="2.7.1.144"/>
    </reaction>
</comment>
<comment type="pathway">
    <text evidence="1">Carbohydrate metabolism; D-tagatose 6-phosphate degradation; D-glyceraldehyde 3-phosphate and glycerone phosphate from D-tagatose 6-phosphate: step 1/2.</text>
</comment>
<comment type="similarity">
    <text evidence="1">Belongs to the carbohydrate kinase PfkB family. LacC subfamily.</text>
</comment>